<proteinExistence type="inferred from homology"/>
<gene>
    <name evidence="1" type="primary">mutS</name>
    <name type="ordered locus">CPS_4137</name>
</gene>
<reference key="1">
    <citation type="journal article" date="2005" name="Proc. Natl. Acad. Sci. U.S.A.">
        <title>The psychrophilic lifestyle as revealed by the genome sequence of Colwellia psychrerythraea 34H through genomic and proteomic analyses.</title>
        <authorList>
            <person name="Methe B.A."/>
            <person name="Nelson K.E."/>
            <person name="Deming J.W."/>
            <person name="Momen B."/>
            <person name="Melamud E."/>
            <person name="Zhang X."/>
            <person name="Moult J."/>
            <person name="Madupu R."/>
            <person name="Nelson W.C."/>
            <person name="Dodson R.J."/>
            <person name="Brinkac L.M."/>
            <person name="Daugherty S.C."/>
            <person name="Durkin A.S."/>
            <person name="DeBoy R.T."/>
            <person name="Kolonay J.F."/>
            <person name="Sullivan S.A."/>
            <person name="Zhou L."/>
            <person name="Davidsen T.M."/>
            <person name="Wu M."/>
            <person name="Huston A.L."/>
            <person name="Lewis M."/>
            <person name="Weaver B."/>
            <person name="Weidman J.F."/>
            <person name="Khouri H."/>
            <person name="Utterback T.R."/>
            <person name="Feldblyum T.V."/>
            <person name="Fraser C.M."/>
        </authorList>
    </citation>
    <scope>NUCLEOTIDE SEQUENCE [LARGE SCALE GENOMIC DNA]</scope>
    <source>
        <strain>34H / ATCC BAA-681</strain>
    </source>
</reference>
<accession>Q47WN0</accession>
<name>MUTS_COLP3</name>
<protein>
    <recommendedName>
        <fullName evidence="1">DNA mismatch repair protein MutS</fullName>
    </recommendedName>
</protein>
<comment type="function">
    <text evidence="1">This protein is involved in the repair of mismatches in DNA. It is possible that it carries out the mismatch recognition step. This protein has a weak ATPase activity.</text>
</comment>
<comment type="similarity">
    <text evidence="1">Belongs to the DNA mismatch repair MutS family.</text>
</comment>
<keyword id="KW-0067">ATP-binding</keyword>
<keyword id="KW-0227">DNA damage</keyword>
<keyword id="KW-0234">DNA repair</keyword>
<keyword id="KW-0238">DNA-binding</keyword>
<keyword id="KW-0547">Nucleotide-binding</keyword>
<sequence>MTTATKDLSSHTPMMRQYLTIKAEFPHTLIFYRMGDFYELFFDDAKKASDLLDISLTARGKTGGNAIPMAGVPYHAAENYLAKLVALGESVAICEQIGDPATSKGPVERKVVRVITPGTVSDEALLVDRQDNLIVAIVDNQSPNAKLKTSSAPAFGLAYLDMASGRFVLTEPQTAEQLQAELQRLSPAELLYSESLQDFSLIEQRKGLRRRPEWEFDLDTAISLLNKQFDTKELTGFGVDDKPLGLAAAGCLFQYVKDTQRTALPHIRAIVCESANKGVVLDAATRRNLELTQNLHGGLDNTLAAILDKSSTPMGSRLLKRWLHFPLRDLTVLNNRQNTVSDIIALDLIAPIQPLLKGLGDIERIVSRIALGSARPRDFARLRHALQQLPELQNELKSGLTESPTNYLATIAQQSQPMPQLEGLLVHAIVENPPVLIRDGGVIAPGYNNELDVLRDLSDGATEFLAQLEQREKERTGIHSLKVGYNRVHGFFIEMSRTAAVDVPDDYIRRQTLKNNERFITEELKQHEEKVLSAQSKFLALEKSLYQELFDKVLPDLAQLQQLSQAIAELDVLTTFAERALALNYVKPSLVEEPGISIDAGRHVVVEQMTNDAFIANPVLLTEQRKMLIITGPNMGGKSTYMRQTALIVLLAHIGCYVPADNATIGLVDRIFTRIGASDDLASGRSTFMVEMTETANILHNATDKSLVLLDEIGRGTSTYDGLSLAWACAEMLALKTKAFTLFATHYFELTLLAGQISTLANVHLDAMEHDDNIVFMHAVQEGAASKSFGLQVAQLAGVPKTVIKRAKQRLSELEQQQTPSILPAPIQNDAFEQLSFAPEEHSVVTTLIDTDINELSPRQALDLLFSLKEQL</sequence>
<evidence type="ECO:0000255" key="1">
    <source>
        <dbReference type="HAMAP-Rule" id="MF_00096"/>
    </source>
</evidence>
<dbReference type="EMBL" id="CP000083">
    <property type="protein sequence ID" value="AAZ28408.1"/>
    <property type="molecule type" value="Genomic_DNA"/>
</dbReference>
<dbReference type="RefSeq" id="WP_011044873.1">
    <property type="nucleotide sequence ID" value="NC_003910.7"/>
</dbReference>
<dbReference type="SMR" id="Q47WN0"/>
<dbReference type="STRING" id="167879.CPS_4137"/>
<dbReference type="KEGG" id="cps:CPS_4137"/>
<dbReference type="eggNOG" id="COG0249">
    <property type="taxonomic scope" value="Bacteria"/>
</dbReference>
<dbReference type="HOGENOM" id="CLU_002472_4_0_6"/>
<dbReference type="Proteomes" id="UP000000547">
    <property type="component" value="Chromosome"/>
</dbReference>
<dbReference type="GO" id="GO:0005829">
    <property type="term" value="C:cytosol"/>
    <property type="evidence" value="ECO:0007669"/>
    <property type="project" value="TreeGrafter"/>
</dbReference>
<dbReference type="GO" id="GO:0005524">
    <property type="term" value="F:ATP binding"/>
    <property type="evidence" value="ECO:0007669"/>
    <property type="project" value="UniProtKB-UniRule"/>
</dbReference>
<dbReference type="GO" id="GO:0140664">
    <property type="term" value="F:ATP-dependent DNA damage sensor activity"/>
    <property type="evidence" value="ECO:0007669"/>
    <property type="project" value="InterPro"/>
</dbReference>
<dbReference type="GO" id="GO:0003684">
    <property type="term" value="F:damaged DNA binding"/>
    <property type="evidence" value="ECO:0007669"/>
    <property type="project" value="UniProtKB-UniRule"/>
</dbReference>
<dbReference type="GO" id="GO:0030983">
    <property type="term" value="F:mismatched DNA binding"/>
    <property type="evidence" value="ECO:0007669"/>
    <property type="project" value="InterPro"/>
</dbReference>
<dbReference type="GO" id="GO:0006298">
    <property type="term" value="P:mismatch repair"/>
    <property type="evidence" value="ECO:0007669"/>
    <property type="project" value="UniProtKB-UniRule"/>
</dbReference>
<dbReference type="CDD" id="cd03284">
    <property type="entry name" value="ABC_MutS1"/>
    <property type="match status" value="1"/>
</dbReference>
<dbReference type="FunFam" id="1.10.1420.10:FF:000002">
    <property type="entry name" value="DNA mismatch repair protein MutS"/>
    <property type="match status" value="1"/>
</dbReference>
<dbReference type="FunFam" id="3.40.1170.10:FF:000001">
    <property type="entry name" value="DNA mismatch repair protein MutS"/>
    <property type="match status" value="1"/>
</dbReference>
<dbReference type="FunFam" id="3.40.50.300:FF:000283">
    <property type="entry name" value="DNA mismatch repair protein MutS"/>
    <property type="match status" value="1"/>
</dbReference>
<dbReference type="Gene3D" id="1.10.1420.10">
    <property type="match status" value="2"/>
</dbReference>
<dbReference type="Gene3D" id="6.10.140.430">
    <property type="match status" value="1"/>
</dbReference>
<dbReference type="Gene3D" id="3.40.1170.10">
    <property type="entry name" value="DNA repair protein MutS, domain I"/>
    <property type="match status" value="1"/>
</dbReference>
<dbReference type="Gene3D" id="3.30.420.110">
    <property type="entry name" value="MutS, connector domain"/>
    <property type="match status" value="1"/>
</dbReference>
<dbReference type="Gene3D" id="3.40.50.300">
    <property type="entry name" value="P-loop containing nucleotide triphosphate hydrolases"/>
    <property type="match status" value="1"/>
</dbReference>
<dbReference type="HAMAP" id="MF_00096">
    <property type="entry name" value="MutS"/>
    <property type="match status" value="1"/>
</dbReference>
<dbReference type="InterPro" id="IPR005748">
    <property type="entry name" value="DNA_mismatch_repair_MutS"/>
</dbReference>
<dbReference type="InterPro" id="IPR007695">
    <property type="entry name" value="DNA_mismatch_repair_MutS-lik_N"/>
</dbReference>
<dbReference type="InterPro" id="IPR017261">
    <property type="entry name" value="DNA_mismatch_repair_MutS/MSH"/>
</dbReference>
<dbReference type="InterPro" id="IPR000432">
    <property type="entry name" value="DNA_mismatch_repair_MutS_C"/>
</dbReference>
<dbReference type="InterPro" id="IPR007861">
    <property type="entry name" value="DNA_mismatch_repair_MutS_clamp"/>
</dbReference>
<dbReference type="InterPro" id="IPR007696">
    <property type="entry name" value="DNA_mismatch_repair_MutS_core"/>
</dbReference>
<dbReference type="InterPro" id="IPR016151">
    <property type="entry name" value="DNA_mismatch_repair_MutS_N"/>
</dbReference>
<dbReference type="InterPro" id="IPR036187">
    <property type="entry name" value="DNA_mismatch_repair_MutS_sf"/>
</dbReference>
<dbReference type="InterPro" id="IPR007860">
    <property type="entry name" value="DNA_mmatch_repair_MutS_con_dom"/>
</dbReference>
<dbReference type="InterPro" id="IPR045076">
    <property type="entry name" value="MutS"/>
</dbReference>
<dbReference type="InterPro" id="IPR036678">
    <property type="entry name" value="MutS_con_dom_sf"/>
</dbReference>
<dbReference type="InterPro" id="IPR027417">
    <property type="entry name" value="P-loop_NTPase"/>
</dbReference>
<dbReference type="NCBIfam" id="TIGR01070">
    <property type="entry name" value="mutS1"/>
    <property type="match status" value="1"/>
</dbReference>
<dbReference type="NCBIfam" id="NF003810">
    <property type="entry name" value="PRK05399.1"/>
    <property type="match status" value="1"/>
</dbReference>
<dbReference type="PANTHER" id="PTHR11361:SF34">
    <property type="entry name" value="DNA MISMATCH REPAIR PROTEIN MSH1, MITOCHONDRIAL"/>
    <property type="match status" value="1"/>
</dbReference>
<dbReference type="PANTHER" id="PTHR11361">
    <property type="entry name" value="DNA MISMATCH REPAIR PROTEIN MUTS FAMILY MEMBER"/>
    <property type="match status" value="1"/>
</dbReference>
<dbReference type="Pfam" id="PF01624">
    <property type="entry name" value="MutS_I"/>
    <property type="match status" value="1"/>
</dbReference>
<dbReference type="Pfam" id="PF05188">
    <property type="entry name" value="MutS_II"/>
    <property type="match status" value="1"/>
</dbReference>
<dbReference type="Pfam" id="PF05192">
    <property type="entry name" value="MutS_III"/>
    <property type="match status" value="1"/>
</dbReference>
<dbReference type="Pfam" id="PF05190">
    <property type="entry name" value="MutS_IV"/>
    <property type="match status" value="1"/>
</dbReference>
<dbReference type="Pfam" id="PF00488">
    <property type="entry name" value="MutS_V"/>
    <property type="match status" value="1"/>
</dbReference>
<dbReference type="PIRSF" id="PIRSF037677">
    <property type="entry name" value="DNA_mis_repair_Msh6"/>
    <property type="match status" value="1"/>
</dbReference>
<dbReference type="SMART" id="SM00534">
    <property type="entry name" value="MUTSac"/>
    <property type="match status" value="1"/>
</dbReference>
<dbReference type="SMART" id="SM00533">
    <property type="entry name" value="MUTSd"/>
    <property type="match status" value="1"/>
</dbReference>
<dbReference type="SUPFAM" id="SSF55271">
    <property type="entry name" value="DNA repair protein MutS, domain I"/>
    <property type="match status" value="1"/>
</dbReference>
<dbReference type="SUPFAM" id="SSF53150">
    <property type="entry name" value="DNA repair protein MutS, domain II"/>
    <property type="match status" value="1"/>
</dbReference>
<dbReference type="SUPFAM" id="SSF48334">
    <property type="entry name" value="DNA repair protein MutS, domain III"/>
    <property type="match status" value="1"/>
</dbReference>
<dbReference type="SUPFAM" id="SSF52540">
    <property type="entry name" value="P-loop containing nucleoside triphosphate hydrolases"/>
    <property type="match status" value="1"/>
</dbReference>
<dbReference type="PROSITE" id="PS00486">
    <property type="entry name" value="DNA_MISMATCH_REPAIR_2"/>
    <property type="match status" value="1"/>
</dbReference>
<organism>
    <name type="scientific">Colwellia psychrerythraea (strain 34H / ATCC BAA-681)</name>
    <name type="common">Vibrio psychroerythus</name>
    <dbReference type="NCBI Taxonomy" id="167879"/>
    <lineage>
        <taxon>Bacteria</taxon>
        <taxon>Pseudomonadati</taxon>
        <taxon>Pseudomonadota</taxon>
        <taxon>Gammaproteobacteria</taxon>
        <taxon>Alteromonadales</taxon>
        <taxon>Colwelliaceae</taxon>
        <taxon>Colwellia</taxon>
    </lineage>
</organism>
<feature type="chain" id="PRO_0000224363" description="DNA mismatch repair protein MutS">
    <location>
        <begin position="1"/>
        <end position="872"/>
    </location>
</feature>
<feature type="binding site" evidence="1">
    <location>
        <begin position="632"/>
        <end position="639"/>
    </location>
    <ligand>
        <name>ATP</name>
        <dbReference type="ChEBI" id="CHEBI:30616"/>
    </ligand>
</feature>